<reference key="1">
    <citation type="journal article" date="2001" name="Lancet">
        <title>Whole genome sequencing of meticillin-resistant Staphylococcus aureus.</title>
        <authorList>
            <person name="Kuroda M."/>
            <person name="Ohta T."/>
            <person name="Uchiyama I."/>
            <person name="Baba T."/>
            <person name="Yuzawa H."/>
            <person name="Kobayashi I."/>
            <person name="Cui L."/>
            <person name="Oguchi A."/>
            <person name="Aoki K."/>
            <person name="Nagai Y."/>
            <person name="Lian J.-Q."/>
            <person name="Ito T."/>
            <person name="Kanamori M."/>
            <person name="Matsumaru H."/>
            <person name="Maruyama A."/>
            <person name="Murakami H."/>
            <person name="Hosoyama A."/>
            <person name="Mizutani-Ui Y."/>
            <person name="Takahashi N.K."/>
            <person name="Sawano T."/>
            <person name="Inoue R."/>
            <person name="Kaito C."/>
            <person name="Sekimizu K."/>
            <person name="Hirakawa H."/>
            <person name="Kuhara S."/>
            <person name="Goto S."/>
            <person name="Yabuzaki J."/>
            <person name="Kanehisa M."/>
            <person name="Yamashita A."/>
            <person name="Oshima K."/>
            <person name="Furuya K."/>
            <person name="Yoshino C."/>
            <person name="Shiba T."/>
            <person name="Hattori M."/>
            <person name="Ogasawara N."/>
            <person name="Hayashi H."/>
            <person name="Hiramatsu K."/>
        </authorList>
    </citation>
    <scope>NUCLEOTIDE SEQUENCE [LARGE SCALE GENOMIC DNA]</scope>
    <source>
        <strain>N315</strain>
    </source>
</reference>
<reference key="2">
    <citation type="submission" date="2007-10" db="UniProtKB">
        <title>Shotgun proteomic analysis of total and membrane protein extracts of S. aureus strain N315.</title>
        <authorList>
            <person name="Vaezzadeh A.R."/>
            <person name="Deshusses J."/>
            <person name="Lescuyer P."/>
            <person name="Hochstrasser D.F."/>
        </authorList>
    </citation>
    <scope>IDENTIFICATION BY MASS SPECTROMETRY [LARGE SCALE ANALYSIS]</scope>
    <source>
        <strain>N315</strain>
    </source>
</reference>
<accession>Q7A3S2</accession>
<sequence length="315" mass="35584">MLKNKILATTLSVSLLAPLANPLLENAKAANDTEDIGKGSDIEIIKRTEDKTSNKWGVTQNIQFDFVKDKKYNKDALILKMQGFISSRTTYYNYKKTNHVKAMRWPFQYNIGLKTNDKYVSLINYLPKNKIESTNVSQTLGYNIGGNFQSAPSLGGNGSFNYSKSISYTQQNYVSEVEQQNSKSVLWGVKANSFATESGQKSAFDSDLFVGYKPHSKDPRDYFVPDSELPPLVQSGFNPSFIATVSHEKGSSDTSEFEITYGRNMDVTHAIKRSTHYGNSYLDGHRVHNAFVNRNYTVKYEVNWKTHEIKVKGQN</sequence>
<feature type="signal peptide" evidence="2">
    <location>
        <begin position="1"/>
        <end position="29"/>
    </location>
</feature>
<feature type="chain" id="PRO_0000045222" description="Gamma-hemolysin component C">
    <location>
        <begin position="30"/>
        <end position="315"/>
    </location>
</feature>
<proteinExistence type="evidence at protein level"/>
<protein>
    <recommendedName>
        <fullName>Gamma-hemolysin component C</fullName>
    </recommendedName>
</protein>
<evidence type="ECO:0000250" key="1"/>
<evidence type="ECO:0000255" key="2"/>
<evidence type="ECO:0000305" key="3"/>
<name>HLGC_STAAN</name>
<organism>
    <name type="scientific">Staphylococcus aureus (strain N315)</name>
    <dbReference type="NCBI Taxonomy" id="158879"/>
    <lineage>
        <taxon>Bacteria</taxon>
        <taxon>Bacillati</taxon>
        <taxon>Bacillota</taxon>
        <taxon>Bacilli</taxon>
        <taxon>Bacillales</taxon>
        <taxon>Staphylococcaceae</taxon>
        <taxon>Staphylococcus</taxon>
    </lineage>
</organism>
<dbReference type="EMBL" id="BA000018">
    <property type="protein sequence ID" value="BAB43510.1"/>
    <property type="molecule type" value="Genomic_DNA"/>
</dbReference>
<dbReference type="PIR" id="E90043">
    <property type="entry name" value="E90043"/>
</dbReference>
<dbReference type="RefSeq" id="WP_000916704.1">
    <property type="nucleotide sequence ID" value="NC_002745.2"/>
</dbReference>
<dbReference type="SMR" id="Q7A3S2"/>
<dbReference type="EnsemblBacteria" id="BAB43510">
    <property type="protein sequence ID" value="BAB43510"/>
    <property type="gene ID" value="BAB43510"/>
</dbReference>
<dbReference type="KEGG" id="sau:SA2208"/>
<dbReference type="HOGENOM" id="CLU_075311_0_0_9"/>
<dbReference type="GO" id="GO:0005576">
    <property type="term" value="C:extracellular region"/>
    <property type="evidence" value="ECO:0007669"/>
    <property type="project" value="InterPro"/>
</dbReference>
<dbReference type="GO" id="GO:0090729">
    <property type="term" value="F:toxin activity"/>
    <property type="evidence" value="ECO:0007669"/>
    <property type="project" value="UniProtKB-KW"/>
</dbReference>
<dbReference type="GO" id="GO:0051715">
    <property type="term" value="P:cytolysis in another organism"/>
    <property type="evidence" value="ECO:0007669"/>
    <property type="project" value="InterPro"/>
</dbReference>
<dbReference type="Gene3D" id="2.70.240.10">
    <property type="entry name" value="Leukocidin/porin MspA"/>
    <property type="match status" value="1"/>
</dbReference>
<dbReference type="InterPro" id="IPR003963">
    <property type="entry name" value="Bi-component_toxin_staph"/>
</dbReference>
<dbReference type="InterPro" id="IPR016183">
    <property type="entry name" value="Leukocidin/Hemolysin_toxin"/>
</dbReference>
<dbReference type="InterPro" id="IPR036435">
    <property type="entry name" value="Leukocidin/porin_MspA_sf"/>
</dbReference>
<dbReference type="NCBIfam" id="TIGR01002">
    <property type="entry name" value="hlyII"/>
    <property type="match status" value="1"/>
</dbReference>
<dbReference type="Pfam" id="PF07968">
    <property type="entry name" value="Leukocidin"/>
    <property type="match status" value="1"/>
</dbReference>
<dbReference type="PRINTS" id="PR01468">
    <property type="entry name" value="BICOMPNTOXIN"/>
</dbReference>
<dbReference type="SUPFAM" id="SSF56959">
    <property type="entry name" value="Leukocidin-like"/>
    <property type="match status" value="1"/>
</dbReference>
<comment type="function">
    <text evidence="1">Toxin that seems to act by forming pores in the membrane of the cell. Has a hemolytic and a leucotoxic activity (By similarity).</text>
</comment>
<comment type="subunit">
    <text evidence="1">Toxicity requires sequential binding and synergistic association of a class S and a class F component which form heterooligomeric complexes. HlgC (class S) associates with HlgB (class F) thus forming an CB toxin (By similarity).</text>
</comment>
<comment type="similarity">
    <text evidence="3">Belongs to the aerolysin family.</text>
</comment>
<gene>
    <name type="primary">hlgC</name>
    <name type="ordered locus">SA2208</name>
</gene>
<keyword id="KW-0204">Cytolysis</keyword>
<keyword id="KW-0354">Hemolysis</keyword>
<keyword id="KW-0732">Signal</keyword>
<keyword id="KW-0800">Toxin</keyword>
<keyword id="KW-0843">Virulence</keyword>